<name>RS15_DEIRA</name>
<organism>
    <name type="scientific">Deinococcus radiodurans (strain ATCC 13939 / DSM 20539 / JCM 16871 / CCUG 27074 / LMG 4051 / NBRC 15346 / NCIMB 9279 / VKM B-1422 / R1)</name>
    <dbReference type="NCBI Taxonomy" id="243230"/>
    <lineage>
        <taxon>Bacteria</taxon>
        <taxon>Thermotogati</taxon>
        <taxon>Deinococcota</taxon>
        <taxon>Deinococci</taxon>
        <taxon>Deinococcales</taxon>
        <taxon>Deinococcaceae</taxon>
        <taxon>Deinococcus</taxon>
    </lineage>
</organism>
<evidence type="ECO:0000255" key="1">
    <source>
        <dbReference type="HAMAP-Rule" id="MF_01343"/>
    </source>
</evidence>
<evidence type="ECO:0000305" key="2"/>
<keyword id="KW-1185">Reference proteome</keyword>
<keyword id="KW-0687">Ribonucleoprotein</keyword>
<keyword id="KW-0689">Ribosomal protein</keyword>
<keyword id="KW-0694">RNA-binding</keyword>
<keyword id="KW-0699">rRNA-binding</keyword>
<sequence>MIDKQQVISDNAAGANDTGSTAVQVALLTARINNLAGHLQTNKKDKAGQRGLQLMNGQRRRLLKYLERTDYDAYIALTDKLGIRRGQRIVR</sequence>
<reference key="1">
    <citation type="journal article" date="1999" name="Science">
        <title>Genome sequence of the radioresistant bacterium Deinococcus radiodurans R1.</title>
        <authorList>
            <person name="White O."/>
            <person name="Eisen J.A."/>
            <person name="Heidelberg J.F."/>
            <person name="Hickey E.K."/>
            <person name="Peterson J.D."/>
            <person name="Dodson R.J."/>
            <person name="Haft D.H."/>
            <person name="Gwinn M.L."/>
            <person name="Nelson W.C."/>
            <person name="Richardson D.L."/>
            <person name="Moffat K.S."/>
            <person name="Qin H."/>
            <person name="Jiang L."/>
            <person name="Pamphile W."/>
            <person name="Crosby M."/>
            <person name="Shen M."/>
            <person name="Vamathevan J.J."/>
            <person name="Lam P."/>
            <person name="McDonald L.A."/>
            <person name="Utterback T.R."/>
            <person name="Zalewski C."/>
            <person name="Makarova K.S."/>
            <person name="Aravind L."/>
            <person name="Daly M.J."/>
            <person name="Minton K.W."/>
            <person name="Fleischmann R.D."/>
            <person name="Ketchum K.A."/>
            <person name="Nelson K.E."/>
            <person name="Salzberg S.L."/>
            <person name="Smith H.O."/>
            <person name="Venter J.C."/>
            <person name="Fraser C.M."/>
        </authorList>
    </citation>
    <scope>NUCLEOTIDE SEQUENCE [LARGE SCALE GENOMIC DNA]</scope>
    <source>
        <strain>ATCC 13939 / DSM 20539 / JCM 16871 / CCUG 27074 / LMG 4051 / NBRC 15346 / NCIMB 9279 / VKM B-1422 / R1</strain>
    </source>
</reference>
<protein>
    <recommendedName>
        <fullName evidence="1">Small ribosomal subunit protein uS15</fullName>
    </recommendedName>
    <alternativeName>
        <fullName evidence="2">30S ribosomal protein S15</fullName>
    </alternativeName>
</protein>
<gene>
    <name evidence="1" type="primary">rpsO</name>
    <name type="ordered locus">DR_0341</name>
</gene>
<accession>Q9RXH2</accession>
<dbReference type="EMBL" id="AE000513">
    <property type="protein sequence ID" value="AAF09921.1"/>
    <property type="molecule type" value="Genomic_DNA"/>
</dbReference>
<dbReference type="PIR" id="E75531">
    <property type="entry name" value="E75531"/>
</dbReference>
<dbReference type="RefSeq" id="NP_294064.1">
    <property type="nucleotide sequence ID" value="NC_001263.1"/>
</dbReference>
<dbReference type="RefSeq" id="WP_010886986.1">
    <property type="nucleotide sequence ID" value="NC_001263.1"/>
</dbReference>
<dbReference type="SMR" id="Q9RXH2"/>
<dbReference type="FunCoup" id="Q9RXH2">
    <property type="interactions" value="367"/>
</dbReference>
<dbReference type="STRING" id="243230.DR_0341"/>
<dbReference type="PaxDb" id="243230-DR_0341"/>
<dbReference type="EnsemblBacteria" id="AAF09921">
    <property type="protein sequence ID" value="AAF09921"/>
    <property type="gene ID" value="DR_0341"/>
</dbReference>
<dbReference type="GeneID" id="69516574"/>
<dbReference type="KEGG" id="dra:DR_0341"/>
<dbReference type="PATRIC" id="fig|243230.17.peg.510"/>
<dbReference type="eggNOG" id="COG0184">
    <property type="taxonomic scope" value="Bacteria"/>
</dbReference>
<dbReference type="HOGENOM" id="CLU_148518_0_0_0"/>
<dbReference type="InParanoid" id="Q9RXH2"/>
<dbReference type="OrthoDB" id="9799262at2"/>
<dbReference type="Proteomes" id="UP000002524">
    <property type="component" value="Chromosome 1"/>
</dbReference>
<dbReference type="GO" id="GO:0022627">
    <property type="term" value="C:cytosolic small ribosomal subunit"/>
    <property type="evidence" value="ECO:0000318"/>
    <property type="project" value="GO_Central"/>
</dbReference>
<dbReference type="GO" id="GO:0019843">
    <property type="term" value="F:rRNA binding"/>
    <property type="evidence" value="ECO:0007669"/>
    <property type="project" value="UniProtKB-UniRule"/>
</dbReference>
<dbReference type="GO" id="GO:0003735">
    <property type="term" value="F:structural constituent of ribosome"/>
    <property type="evidence" value="ECO:0007669"/>
    <property type="project" value="InterPro"/>
</dbReference>
<dbReference type="GO" id="GO:0006412">
    <property type="term" value="P:translation"/>
    <property type="evidence" value="ECO:0007669"/>
    <property type="project" value="UniProtKB-UniRule"/>
</dbReference>
<dbReference type="CDD" id="cd00353">
    <property type="entry name" value="Ribosomal_S15p_S13e"/>
    <property type="match status" value="1"/>
</dbReference>
<dbReference type="FunFam" id="1.10.287.10:FF:000002">
    <property type="entry name" value="30S ribosomal protein S15"/>
    <property type="match status" value="1"/>
</dbReference>
<dbReference type="Gene3D" id="6.10.250.3130">
    <property type="match status" value="1"/>
</dbReference>
<dbReference type="Gene3D" id="1.10.287.10">
    <property type="entry name" value="S15/NS1, RNA-binding"/>
    <property type="match status" value="1"/>
</dbReference>
<dbReference type="HAMAP" id="MF_01343_B">
    <property type="entry name" value="Ribosomal_uS15_B"/>
    <property type="match status" value="1"/>
</dbReference>
<dbReference type="InterPro" id="IPR000589">
    <property type="entry name" value="Ribosomal_uS15"/>
</dbReference>
<dbReference type="InterPro" id="IPR005290">
    <property type="entry name" value="Ribosomal_uS15_bac-type"/>
</dbReference>
<dbReference type="InterPro" id="IPR009068">
    <property type="entry name" value="uS15_NS1_RNA-bd_sf"/>
</dbReference>
<dbReference type="NCBIfam" id="TIGR00952">
    <property type="entry name" value="S15_bact"/>
    <property type="match status" value="1"/>
</dbReference>
<dbReference type="PANTHER" id="PTHR23321">
    <property type="entry name" value="RIBOSOMAL PROTEIN S15, BACTERIAL AND ORGANELLAR"/>
    <property type="match status" value="1"/>
</dbReference>
<dbReference type="PANTHER" id="PTHR23321:SF26">
    <property type="entry name" value="SMALL RIBOSOMAL SUBUNIT PROTEIN US15M"/>
    <property type="match status" value="1"/>
</dbReference>
<dbReference type="Pfam" id="PF00312">
    <property type="entry name" value="Ribosomal_S15"/>
    <property type="match status" value="1"/>
</dbReference>
<dbReference type="SMART" id="SM01387">
    <property type="entry name" value="Ribosomal_S15"/>
    <property type="match status" value="1"/>
</dbReference>
<dbReference type="SUPFAM" id="SSF47060">
    <property type="entry name" value="S15/NS1 RNA-binding domain"/>
    <property type="match status" value="1"/>
</dbReference>
<dbReference type="PROSITE" id="PS00362">
    <property type="entry name" value="RIBOSOMAL_S15"/>
    <property type="match status" value="1"/>
</dbReference>
<comment type="function">
    <text evidence="1">One of the primary rRNA binding proteins, it binds directly to 16S rRNA where it helps nucleate assembly of the platform of the 30S subunit by binding and bridging several RNA helices of the 16S rRNA.</text>
</comment>
<comment type="function">
    <text evidence="1">Forms an intersubunit bridge (bridge B4) with the 23S rRNA of the 50S subunit in the ribosome.</text>
</comment>
<comment type="subunit">
    <text evidence="1">Part of the 30S ribosomal subunit. Forms a bridge to the 50S subunit in the 70S ribosome, contacting the 23S rRNA.</text>
</comment>
<comment type="similarity">
    <text evidence="1">Belongs to the universal ribosomal protein uS15 family.</text>
</comment>
<proteinExistence type="inferred from homology"/>
<feature type="chain" id="PRO_0000115429" description="Small ribosomal subunit protein uS15">
    <location>
        <begin position="1"/>
        <end position="91"/>
    </location>
</feature>